<accession>P40602</accession>
<accession>Q93Z14</accession>
<accession>Q9LNT8</accession>
<evidence type="ECO:0000250" key="1"/>
<evidence type="ECO:0000255" key="2"/>
<evidence type="ECO:0000256" key="3">
    <source>
        <dbReference type="SAM" id="MobiDB-lite"/>
    </source>
</evidence>
<evidence type="ECO:0000305" key="4"/>
<keyword id="KW-0025">Alternative splicing</keyword>
<keyword id="KW-1185">Reference proteome</keyword>
<keyword id="KW-0732">Signal</keyword>
<name>APG_ARATH</name>
<reference key="1">
    <citation type="journal article" date="1993" name="Plant J.">
        <title>Gametophytic and sporophytic expression of an anther-specific Arabidopsis thaliana gene.</title>
        <authorList>
            <person name="Roberts M.R."/>
            <person name="Foster G.D."/>
            <person name="Blundell R.P."/>
            <person name="Robinson S.W."/>
            <person name="Kumar A."/>
            <person name="Draper J."/>
            <person name="Scott R."/>
        </authorList>
    </citation>
    <scope>NUCLEOTIDE SEQUENCE [GENOMIC DNA]</scope>
</reference>
<reference key="2">
    <citation type="journal article" date="2000" name="Nature">
        <title>Sequence and analysis of chromosome 1 of the plant Arabidopsis thaliana.</title>
        <authorList>
            <person name="Theologis A."/>
            <person name="Ecker J.R."/>
            <person name="Palm C.J."/>
            <person name="Federspiel N.A."/>
            <person name="Kaul S."/>
            <person name="White O."/>
            <person name="Alonso J."/>
            <person name="Altafi H."/>
            <person name="Araujo R."/>
            <person name="Bowman C.L."/>
            <person name="Brooks S.Y."/>
            <person name="Buehler E."/>
            <person name="Chan A."/>
            <person name="Chao Q."/>
            <person name="Chen H."/>
            <person name="Cheuk R.F."/>
            <person name="Chin C.W."/>
            <person name="Chung M.K."/>
            <person name="Conn L."/>
            <person name="Conway A.B."/>
            <person name="Conway A.R."/>
            <person name="Creasy T.H."/>
            <person name="Dewar K."/>
            <person name="Dunn P."/>
            <person name="Etgu P."/>
            <person name="Feldblyum T.V."/>
            <person name="Feng J.-D."/>
            <person name="Fong B."/>
            <person name="Fujii C.Y."/>
            <person name="Gill J.E."/>
            <person name="Goldsmith A.D."/>
            <person name="Haas B."/>
            <person name="Hansen N.F."/>
            <person name="Hughes B."/>
            <person name="Huizar L."/>
            <person name="Hunter J.L."/>
            <person name="Jenkins J."/>
            <person name="Johnson-Hopson C."/>
            <person name="Khan S."/>
            <person name="Khaykin E."/>
            <person name="Kim C.J."/>
            <person name="Koo H.L."/>
            <person name="Kremenetskaia I."/>
            <person name="Kurtz D.B."/>
            <person name="Kwan A."/>
            <person name="Lam B."/>
            <person name="Langin-Hooper S."/>
            <person name="Lee A."/>
            <person name="Lee J.M."/>
            <person name="Lenz C.A."/>
            <person name="Li J.H."/>
            <person name="Li Y.-P."/>
            <person name="Lin X."/>
            <person name="Liu S.X."/>
            <person name="Liu Z.A."/>
            <person name="Luros J.S."/>
            <person name="Maiti R."/>
            <person name="Marziali A."/>
            <person name="Militscher J."/>
            <person name="Miranda M."/>
            <person name="Nguyen M."/>
            <person name="Nierman W.C."/>
            <person name="Osborne B.I."/>
            <person name="Pai G."/>
            <person name="Peterson J."/>
            <person name="Pham P.K."/>
            <person name="Rizzo M."/>
            <person name="Rooney T."/>
            <person name="Rowley D."/>
            <person name="Sakano H."/>
            <person name="Salzberg S.L."/>
            <person name="Schwartz J.R."/>
            <person name="Shinn P."/>
            <person name="Southwick A.M."/>
            <person name="Sun H."/>
            <person name="Tallon L.J."/>
            <person name="Tambunga G."/>
            <person name="Toriumi M.J."/>
            <person name="Town C.D."/>
            <person name="Utterback T."/>
            <person name="Van Aken S."/>
            <person name="Vaysberg M."/>
            <person name="Vysotskaia V.S."/>
            <person name="Walker M."/>
            <person name="Wu D."/>
            <person name="Yu G."/>
            <person name="Fraser C.M."/>
            <person name="Venter J.C."/>
            <person name="Davis R.W."/>
        </authorList>
    </citation>
    <scope>NUCLEOTIDE SEQUENCE [LARGE SCALE GENOMIC DNA]</scope>
    <source>
        <strain>cv. Columbia</strain>
    </source>
</reference>
<reference key="3">
    <citation type="journal article" date="2017" name="Plant J.">
        <title>Araport11: a complete reannotation of the Arabidopsis thaliana reference genome.</title>
        <authorList>
            <person name="Cheng C.Y."/>
            <person name="Krishnakumar V."/>
            <person name="Chan A.P."/>
            <person name="Thibaud-Nissen F."/>
            <person name="Schobel S."/>
            <person name="Town C.D."/>
        </authorList>
    </citation>
    <scope>GENOME REANNOTATION</scope>
    <source>
        <strain>cv. Columbia</strain>
    </source>
</reference>
<reference key="4">
    <citation type="journal article" date="2003" name="Science">
        <title>Empirical analysis of transcriptional activity in the Arabidopsis genome.</title>
        <authorList>
            <person name="Yamada K."/>
            <person name="Lim J."/>
            <person name="Dale J.M."/>
            <person name="Chen H."/>
            <person name="Shinn P."/>
            <person name="Palm C.J."/>
            <person name="Southwick A.M."/>
            <person name="Wu H.C."/>
            <person name="Kim C.J."/>
            <person name="Nguyen M."/>
            <person name="Pham P.K."/>
            <person name="Cheuk R.F."/>
            <person name="Karlin-Newmann G."/>
            <person name="Liu S.X."/>
            <person name="Lam B."/>
            <person name="Sakano H."/>
            <person name="Wu T."/>
            <person name="Yu G."/>
            <person name="Miranda M."/>
            <person name="Quach H.L."/>
            <person name="Tripp M."/>
            <person name="Chang C.H."/>
            <person name="Lee J.M."/>
            <person name="Toriumi M.J."/>
            <person name="Chan M.M."/>
            <person name="Tang C.C."/>
            <person name="Onodera C.S."/>
            <person name="Deng J.M."/>
            <person name="Akiyama K."/>
            <person name="Ansari Y."/>
            <person name="Arakawa T."/>
            <person name="Banh J."/>
            <person name="Banno F."/>
            <person name="Bowser L."/>
            <person name="Brooks S.Y."/>
            <person name="Carninci P."/>
            <person name="Chao Q."/>
            <person name="Choy N."/>
            <person name="Enju A."/>
            <person name="Goldsmith A.D."/>
            <person name="Gurjal M."/>
            <person name="Hansen N.F."/>
            <person name="Hayashizaki Y."/>
            <person name="Johnson-Hopson C."/>
            <person name="Hsuan V.W."/>
            <person name="Iida K."/>
            <person name="Karnes M."/>
            <person name="Khan S."/>
            <person name="Koesema E."/>
            <person name="Ishida J."/>
            <person name="Jiang P.X."/>
            <person name="Jones T."/>
            <person name="Kawai J."/>
            <person name="Kamiya A."/>
            <person name="Meyers C."/>
            <person name="Nakajima M."/>
            <person name="Narusaka M."/>
            <person name="Seki M."/>
            <person name="Sakurai T."/>
            <person name="Satou M."/>
            <person name="Tamse R."/>
            <person name="Vaysberg M."/>
            <person name="Wallender E.K."/>
            <person name="Wong C."/>
            <person name="Yamamura Y."/>
            <person name="Yuan S."/>
            <person name="Shinozaki K."/>
            <person name="Davis R.W."/>
            <person name="Theologis A."/>
            <person name="Ecker J.R."/>
        </authorList>
    </citation>
    <scope>NUCLEOTIDE SEQUENCE [LARGE SCALE MRNA]</scope>
    <source>
        <strain>cv. Columbia</strain>
    </source>
</reference>
<proteinExistence type="evidence at transcript level"/>
<protein>
    <recommendedName>
        <fullName>Anther-specific proline-rich protein APG</fullName>
    </recommendedName>
</protein>
<gene>
    <name type="primary">APG</name>
    <name type="ordered locus">At1g20130</name>
    <name type="ORF">T20H2.9</name>
</gene>
<organism>
    <name type="scientific">Arabidopsis thaliana</name>
    <name type="common">Mouse-ear cress</name>
    <dbReference type="NCBI Taxonomy" id="3702"/>
    <lineage>
        <taxon>Eukaryota</taxon>
        <taxon>Viridiplantae</taxon>
        <taxon>Streptophyta</taxon>
        <taxon>Embryophyta</taxon>
        <taxon>Tracheophyta</taxon>
        <taxon>Spermatophyta</taxon>
        <taxon>Magnoliopsida</taxon>
        <taxon>eudicotyledons</taxon>
        <taxon>Gunneridae</taxon>
        <taxon>Pentapetalae</taxon>
        <taxon>rosids</taxon>
        <taxon>malvids</taxon>
        <taxon>Brassicales</taxon>
        <taxon>Brassicaceae</taxon>
        <taxon>Camelineae</taxon>
        <taxon>Arabidopsis</taxon>
    </lineage>
</organism>
<comment type="alternative products">
    <event type="alternative splicing"/>
    <isoform>
        <id>P40602-1</id>
        <name>1</name>
        <sequence type="displayed"/>
    </isoform>
    <text>A number of isoforms are produced. According to EST sequences.</text>
</comment>
<comment type="tissue specificity">
    <text>Found in sporophytic and gametophytic cell types in the anther, only in male fertile plants.</text>
</comment>
<comment type="developmental stage">
    <text>Expressed in male gametogenesis, during microspore development. Higher expression is found during microspore mitosis with a dramatic decline during pollen maturation.</text>
</comment>
<comment type="similarity">
    <text evidence="4">Belongs to the 'GDSL' lipolytic enzyme family.</text>
</comment>
<comment type="sequence caution" evidence="4">
    <conflict type="erroneous gene model prediction">
        <sequence resource="EMBL-CDS" id="AAF79900"/>
    </conflict>
</comment>
<dbReference type="EMBL" id="X60377">
    <property type="protein sequence ID" value="CAA42925.1"/>
    <property type="molecule type" value="Genomic_DNA"/>
</dbReference>
<dbReference type="EMBL" id="AC022472">
    <property type="protein sequence ID" value="AAF79900.1"/>
    <property type="status" value="ALT_SEQ"/>
    <property type="molecule type" value="Genomic_DNA"/>
</dbReference>
<dbReference type="EMBL" id="CP002684">
    <property type="protein sequence ID" value="AEE29939.1"/>
    <property type="molecule type" value="Genomic_DNA"/>
</dbReference>
<dbReference type="EMBL" id="AY058847">
    <property type="protein sequence ID" value="AAL24235.1"/>
    <property type="molecule type" value="mRNA"/>
</dbReference>
<dbReference type="EMBL" id="BT008301">
    <property type="protein sequence ID" value="AAP37660.1"/>
    <property type="molecule type" value="mRNA"/>
</dbReference>
<dbReference type="PIR" id="A86335">
    <property type="entry name" value="A86335"/>
</dbReference>
<dbReference type="PIR" id="S21961">
    <property type="entry name" value="S21961"/>
</dbReference>
<dbReference type="RefSeq" id="NP_173441.2">
    <molecule id="P40602-1"/>
    <property type="nucleotide sequence ID" value="NM_101867.3"/>
</dbReference>
<dbReference type="SMR" id="P40602"/>
<dbReference type="FunCoup" id="P40602">
    <property type="interactions" value="95"/>
</dbReference>
<dbReference type="STRING" id="3702.P40602"/>
<dbReference type="GlyGen" id="P40602">
    <property type="glycosylation" value="3 sites"/>
</dbReference>
<dbReference type="PaxDb" id="3702-AT1G20130.1"/>
<dbReference type="ProteomicsDB" id="240884">
    <molecule id="P40602-1"/>
</dbReference>
<dbReference type="EnsemblPlants" id="AT1G20130.1">
    <molecule id="P40602-1"/>
    <property type="protein sequence ID" value="AT1G20130.1"/>
    <property type="gene ID" value="AT1G20130"/>
</dbReference>
<dbReference type="GeneID" id="838602"/>
<dbReference type="Gramene" id="AT1G20130.1">
    <molecule id="P40602-1"/>
    <property type="protein sequence ID" value="AT1G20130.1"/>
    <property type="gene ID" value="AT1G20130"/>
</dbReference>
<dbReference type="KEGG" id="ath:AT1G20130"/>
<dbReference type="Araport" id="AT1G20130"/>
<dbReference type="TAIR" id="AT1G20130"/>
<dbReference type="eggNOG" id="ENOG502QSYS">
    <property type="taxonomic scope" value="Eukaryota"/>
</dbReference>
<dbReference type="InParanoid" id="P40602"/>
<dbReference type="PhylomeDB" id="P40602"/>
<dbReference type="BioCyc" id="ARA:AT1G20130-MONOMER"/>
<dbReference type="PRO" id="PR:P40602"/>
<dbReference type="Proteomes" id="UP000006548">
    <property type="component" value="Chromosome 1"/>
</dbReference>
<dbReference type="ExpressionAtlas" id="P40602">
    <property type="expression patterns" value="baseline and differential"/>
</dbReference>
<dbReference type="GO" id="GO:0016298">
    <property type="term" value="F:lipase activity"/>
    <property type="evidence" value="ECO:0007669"/>
    <property type="project" value="InterPro"/>
</dbReference>
<dbReference type="GO" id="GO:0006629">
    <property type="term" value="P:lipid metabolic process"/>
    <property type="evidence" value="ECO:0007669"/>
    <property type="project" value="InterPro"/>
</dbReference>
<dbReference type="CDD" id="cd01837">
    <property type="entry name" value="SGNH_plant_lipase_like"/>
    <property type="match status" value="1"/>
</dbReference>
<dbReference type="FunFam" id="3.40.50.1110:FF:000003">
    <property type="entry name" value="GDSL esterase/lipase APG"/>
    <property type="match status" value="1"/>
</dbReference>
<dbReference type="Gene3D" id="3.40.50.1110">
    <property type="entry name" value="SGNH hydrolase"/>
    <property type="match status" value="1"/>
</dbReference>
<dbReference type="InterPro" id="IPR001087">
    <property type="entry name" value="GDSL"/>
</dbReference>
<dbReference type="InterPro" id="IPR050592">
    <property type="entry name" value="GDSL_lipolytic_enzyme"/>
</dbReference>
<dbReference type="InterPro" id="IPR008265">
    <property type="entry name" value="Lipase_GDSL_AS"/>
</dbReference>
<dbReference type="InterPro" id="IPR003882">
    <property type="entry name" value="Pistil_extensin"/>
</dbReference>
<dbReference type="InterPro" id="IPR036514">
    <property type="entry name" value="SGNH_hydro_sf"/>
</dbReference>
<dbReference type="InterPro" id="IPR035669">
    <property type="entry name" value="SGNH_plant_lipase-like"/>
</dbReference>
<dbReference type="PANTHER" id="PTHR45642:SF49">
    <property type="entry name" value="ANTHER-SPECIFIC PROLINE-RICH PROTEIN APG"/>
    <property type="match status" value="1"/>
</dbReference>
<dbReference type="PANTHER" id="PTHR45642">
    <property type="entry name" value="GDSL ESTERASE/LIPASE EXL3"/>
    <property type="match status" value="1"/>
</dbReference>
<dbReference type="Pfam" id="PF00657">
    <property type="entry name" value="Lipase_GDSL"/>
    <property type="match status" value="1"/>
</dbReference>
<dbReference type="PRINTS" id="PR01218">
    <property type="entry name" value="PSTLEXTENSIN"/>
</dbReference>
<dbReference type="SUPFAM" id="SSF52266">
    <property type="entry name" value="SGNH hydrolase"/>
    <property type="match status" value="1"/>
</dbReference>
<dbReference type="PROSITE" id="PS01098">
    <property type="entry name" value="LIPASE_GDSL_SER"/>
    <property type="match status" value="1"/>
</dbReference>
<feature type="signal peptide" evidence="2">
    <location>
        <begin position="1"/>
        <end position="35"/>
    </location>
</feature>
<feature type="chain" id="PRO_0000017850" description="Anther-specific proline-rich protein APG">
    <location>
        <begin position="36"/>
        <end position="534"/>
    </location>
</feature>
<feature type="region of interest" description="Disordered" evidence="3">
    <location>
        <begin position="59"/>
        <end position="202"/>
    </location>
</feature>
<feature type="compositionally biased region" description="Pro residues" evidence="3">
    <location>
        <begin position="59"/>
        <end position="196"/>
    </location>
</feature>
<feature type="active site" description="Nucleophile" evidence="1">
    <location>
        <position position="211"/>
    </location>
</feature>
<feature type="active site" evidence="1">
    <location>
        <position position="508"/>
    </location>
</feature>
<feature type="active site" evidence="1">
    <location>
        <position position="511"/>
    </location>
</feature>
<feature type="sequence conflict" description="In Ref. 1; CAA42925." evidence="4" ref="1">
    <original>S</original>
    <variation>P</variation>
    <location>
        <position position="77"/>
    </location>
</feature>
<feature type="sequence conflict" description="In Ref. 1; CAA42925." evidence="4" ref="1">
    <original>E</original>
    <variation>A</variation>
    <location>
        <position position="141"/>
    </location>
</feature>
<feature type="sequence conflict" description="In Ref. 1; CAA42925." evidence="4" ref="1">
    <original>E</original>
    <variation>H</variation>
    <location>
        <position position="325"/>
    </location>
</feature>
<sequence>MKRSSLVDSCSYSRIFRSIFCLLSFCIFFLTTTNAQVMHRRLWPWPLWPRPYPQPWPMNPPTPDPSPKPVAPPGPSSKPVAPPGPSPCPSPPPKPQPKPPPAPSPSPCPSPPPKPQPKPVPPPACPPTPPKPQPKPAPPPEPKPAPPPAPKPVPCPSPPKPPAPTPKPVPPHGPPPKPAPAPTPAPSPKPAPSPPKPENKTIPAVFFFGDSVFDTGNNNNLETKIKSNYRPYGMDFKFRVATGRFSNGMVASDYLAKYMGVKEIVPAYLDPKIQPNDLLTGVSFASGGAGYNPTTSEAANAIPMLDQLTYFQDYIEKVNRLVRQEKSQYKLAGLEKTNQLISKGVAIVVGGSNDLIITYFGSGAQRLKNDIDSYTTIIADSAASFVLQLYGYGARRIGVIGTPPLGCVPSQRLKKKKICNEELNYASQLFNSKLLLILGQLSKTLPNSTFVYMDIYTIISQMLETPAAYGFEETKKPCCKTGLLSAGALCKKSTSKICPNTSSYLFWDGVHPTQRAYKTINKVLIKEYLHVLSK</sequence>